<protein>
    <recommendedName>
        <fullName evidence="1">Large ribosomal subunit protein uL16c</fullName>
    </recommendedName>
    <alternativeName>
        <fullName evidence="2">50S ribosomal protein L16, chloroplastic</fullName>
    </alternativeName>
</protein>
<proteinExistence type="inferred from homology"/>
<reference key="1">
    <citation type="journal article" date="2008" name="Mol. Phylogenet. Evol.">
        <title>Complete plastid genome sequence of the chickpea (Cicer arietinum) and the phylogenetic distribution of rps12 and clpP intron losses among legumes (Leguminosae).</title>
        <authorList>
            <person name="Jansen R.K."/>
            <person name="Wojciechowski M.F."/>
            <person name="Sanniyasi E."/>
            <person name="Lee S.-B."/>
            <person name="Daniell H."/>
        </authorList>
    </citation>
    <scope>NUCLEOTIDE SEQUENCE [LARGE SCALE GENOMIC DNA]</scope>
</reference>
<dbReference type="EMBL" id="EU835853">
    <property type="protein sequence ID" value="ACH41106.1"/>
    <property type="molecule type" value="Genomic_DNA"/>
</dbReference>
<dbReference type="RefSeq" id="YP_002149769.1">
    <property type="nucleotide sequence ID" value="NC_011163.1"/>
</dbReference>
<dbReference type="SMR" id="B5LMR0"/>
<dbReference type="PaxDb" id="3827-XP_004514803.1"/>
<dbReference type="GeneID" id="6797505"/>
<dbReference type="KEGG" id="cam:6797505"/>
<dbReference type="eggNOG" id="KOG3422">
    <property type="taxonomic scope" value="Eukaryota"/>
</dbReference>
<dbReference type="OrthoDB" id="1543668at2759"/>
<dbReference type="Proteomes" id="UP000087171">
    <property type="component" value="Chloroplast Pltd"/>
</dbReference>
<dbReference type="GO" id="GO:0009507">
    <property type="term" value="C:chloroplast"/>
    <property type="evidence" value="ECO:0007669"/>
    <property type="project" value="UniProtKB-SubCell"/>
</dbReference>
<dbReference type="GO" id="GO:0005762">
    <property type="term" value="C:mitochondrial large ribosomal subunit"/>
    <property type="evidence" value="ECO:0007669"/>
    <property type="project" value="TreeGrafter"/>
</dbReference>
<dbReference type="GO" id="GO:0019843">
    <property type="term" value="F:rRNA binding"/>
    <property type="evidence" value="ECO:0007669"/>
    <property type="project" value="InterPro"/>
</dbReference>
<dbReference type="GO" id="GO:0003735">
    <property type="term" value="F:structural constituent of ribosome"/>
    <property type="evidence" value="ECO:0007669"/>
    <property type="project" value="InterPro"/>
</dbReference>
<dbReference type="GO" id="GO:0032543">
    <property type="term" value="P:mitochondrial translation"/>
    <property type="evidence" value="ECO:0007669"/>
    <property type="project" value="TreeGrafter"/>
</dbReference>
<dbReference type="CDD" id="cd01433">
    <property type="entry name" value="Ribosomal_L16_L10e"/>
    <property type="match status" value="1"/>
</dbReference>
<dbReference type="FunFam" id="3.90.1170.10:FF:000001">
    <property type="entry name" value="50S ribosomal protein L16"/>
    <property type="match status" value="1"/>
</dbReference>
<dbReference type="Gene3D" id="3.90.1170.10">
    <property type="entry name" value="Ribosomal protein L10e/L16"/>
    <property type="match status" value="1"/>
</dbReference>
<dbReference type="HAMAP" id="MF_01342">
    <property type="entry name" value="Ribosomal_uL16"/>
    <property type="match status" value="1"/>
</dbReference>
<dbReference type="InterPro" id="IPR047873">
    <property type="entry name" value="Ribosomal_uL16"/>
</dbReference>
<dbReference type="InterPro" id="IPR000114">
    <property type="entry name" value="Ribosomal_uL16_bact-type"/>
</dbReference>
<dbReference type="InterPro" id="IPR020798">
    <property type="entry name" value="Ribosomal_uL16_CS"/>
</dbReference>
<dbReference type="InterPro" id="IPR016180">
    <property type="entry name" value="Ribosomal_uL16_dom"/>
</dbReference>
<dbReference type="InterPro" id="IPR036920">
    <property type="entry name" value="Ribosomal_uL16_sf"/>
</dbReference>
<dbReference type="NCBIfam" id="TIGR01164">
    <property type="entry name" value="rplP_bact"/>
    <property type="match status" value="1"/>
</dbReference>
<dbReference type="PANTHER" id="PTHR12220">
    <property type="entry name" value="50S/60S RIBOSOMAL PROTEIN L16"/>
    <property type="match status" value="1"/>
</dbReference>
<dbReference type="PANTHER" id="PTHR12220:SF13">
    <property type="entry name" value="LARGE RIBOSOMAL SUBUNIT PROTEIN UL16M"/>
    <property type="match status" value="1"/>
</dbReference>
<dbReference type="Pfam" id="PF00252">
    <property type="entry name" value="Ribosomal_L16"/>
    <property type="match status" value="1"/>
</dbReference>
<dbReference type="PRINTS" id="PR00060">
    <property type="entry name" value="RIBOSOMALL16"/>
</dbReference>
<dbReference type="SUPFAM" id="SSF54686">
    <property type="entry name" value="Ribosomal protein L16p/L10e"/>
    <property type="match status" value="1"/>
</dbReference>
<dbReference type="PROSITE" id="PS00586">
    <property type="entry name" value="RIBOSOMAL_L16_1"/>
    <property type="match status" value="1"/>
</dbReference>
<dbReference type="PROSITE" id="PS00701">
    <property type="entry name" value="RIBOSOMAL_L16_2"/>
    <property type="match status" value="1"/>
</dbReference>
<keyword id="KW-0150">Chloroplast</keyword>
<keyword id="KW-0934">Plastid</keyword>
<keyword id="KW-1185">Reference proteome</keyword>
<keyword id="KW-0687">Ribonucleoprotein</keyword>
<keyword id="KW-0689">Ribosomal protein</keyword>
<feature type="chain" id="PRO_0000354624" description="Large ribosomal subunit protein uL16c">
    <location>
        <begin position="1"/>
        <end position="139"/>
    </location>
</feature>
<sequence>MLSPKKTRFRKQHRGRMKGKACRGNKICFGKYALQALEPAWITSRQIEAGRRAMSRNVRRGGQIWIRIFPDKPVTVRPTETRMGSGKGSPEYWVAVIKPGKILYEMGGVAENIARKAISLAASKMPIRTQFILLEESHN</sequence>
<evidence type="ECO:0000255" key="1">
    <source>
        <dbReference type="HAMAP-Rule" id="MF_01342"/>
    </source>
</evidence>
<evidence type="ECO:0000305" key="2"/>
<comment type="subunit">
    <text evidence="1">Part of the 50S ribosomal subunit.</text>
</comment>
<comment type="subcellular location">
    <subcellularLocation>
        <location>Plastid</location>
        <location>Chloroplast</location>
    </subcellularLocation>
</comment>
<comment type="similarity">
    <text evidence="1">Belongs to the universal ribosomal protein uL16 family.</text>
</comment>
<gene>
    <name evidence="1" type="primary">rpl16</name>
</gene>
<organism>
    <name type="scientific">Cicer arietinum</name>
    <name type="common">Chickpea</name>
    <name type="synonym">Garbanzo</name>
    <dbReference type="NCBI Taxonomy" id="3827"/>
    <lineage>
        <taxon>Eukaryota</taxon>
        <taxon>Viridiplantae</taxon>
        <taxon>Streptophyta</taxon>
        <taxon>Embryophyta</taxon>
        <taxon>Tracheophyta</taxon>
        <taxon>Spermatophyta</taxon>
        <taxon>Magnoliopsida</taxon>
        <taxon>eudicotyledons</taxon>
        <taxon>Gunneridae</taxon>
        <taxon>Pentapetalae</taxon>
        <taxon>rosids</taxon>
        <taxon>fabids</taxon>
        <taxon>Fabales</taxon>
        <taxon>Fabaceae</taxon>
        <taxon>Papilionoideae</taxon>
        <taxon>50 kb inversion clade</taxon>
        <taxon>NPAAA clade</taxon>
        <taxon>Hologalegina</taxon>
        <taxon>IRL clade</taxon>
        <taxon>Cicereae</taxon>
        <taxon>Cicer</taxon>
    </lineage>
</organism>
<name>RK16_CICAR</name>
<geneLocation type="chloroplast"/>
<accession>B5LMR0</accession>